<protein>
    <recommendedName>
        <fullName>Increased recombination centers protein 13</fullName>
    </recommendedName>
</protein>
<reference key="1">
    <citation type="journal article" date="1997" name="Nature">
        <title>The nucleotide sequence of Saccharomyces cerevisiae chromosome XV.</title>
        <authorList>
            <person name="Dujon B."/>
            <person name="Albermann K."/>
            <person name="Aldea M."/>
            <person name="Alexandraki D."/>
            <person name="Ansorge W."/>
            <person name="Arino J."/>
            <person name="Benes V."/>
            <person name="Bohn C."/>
            <person name="Bolotin-Fukuhara M."/>
            <person name="Bordonne R."/>
            <person name="Boyer J."/>
            <person name="Camasses A."/>
            <person name="Casamayor A."/>
            <person name="Casas C."/>
            <person name="Cheret G."/>
            <person name="Cziepluch C."/>
            <person name="Daignan-Fornier B."/>
            <person name="Dang V.-D."/>
            <person name="de Haan M."/>
            <person name="Delius H."/>
            <person name="Durand P."/>
            <person name="Fairhead C."/>
            <person name="Feldmann H."/>
            <person name="Gaillon L."/>
            <person name="Galisson F."/>
            <person name="Gamo F.-J."/>
            <person name="Gancedo C."/>
            <person name="Goffeau A."/>
            <person name="Goulding S.E."/>
            <person name="Grivell L.A."/>
            <person name="Habbig B."/>
            <person name="Hand N.J."/>
            <person name="Hani J."/>
            <person name="Hattenhorst U."/>
            <person name="Hebling U."/>
            <person name="Hernando Y."/>
            <person name="Herrero E."/>
            <person name="Heumann K."/>
            <person name="Hiesel R."/>
            <person name="Hilger F."/>
            <person name="Hofmann B."/>
            <person name="Hollenberg C.P."/>
            <person name="Hughes B."/>
            <person name="Jauniaux J.-C."/>
            <person name="Kalogeropoulos A."/>
            <person name="Katsoulou C."/>
            <person name="Kordes E."/>
            <person name="Lafuente M.J."/>
            <person name="Landt O."/>
            <person name="Louis E.J."/>
            <person name="Maarse A.C."/>
            <person name="Madania A."/>
            <person name="Mannhaupt G."/>
            <person name="Marck C."/>
            <person name="Martin R.P."/>
            <person name="Mewes H.-W."/>
            <person name="Michaux G."/>
            <person name="Paces V."/>
            <person name="Parle-McDermott A.G."/>
            <person name="Pearson B.M."/>
            <person name="Perrin A."/>
            <person name="Pettersson B."/>
            <person name="Poch O."/>
            <person name="Pohl T.M."/>
            <person name="Poirey R."/>
            <person name="Portetelle D."/>
            <person name="Pujol A."/>
            <person name="Purnelle B."/>
            <person name="Ramezani Rad M."/>
            <person name="Rechmann S."/>
            <person name="Schwager C."/>
            <person name="Schweizer M."/>
            <person name="Sor F."/>
            <person name="Sterky F."/>
            <person name="Tarassov I.A."/>
            <person name="Teodoru C."/>
            <person name="Tettelin H."/>
            <person name="Thierry A."/>
            <person name="Tobiasch E."/>
            <person name="Tzermia M."/>
            <person name="Uhlen M."/>
            <person name="Unseld M."/>
            <person name="Valens M."/>
            <person name="Vandenbol M."/>
            <person name="Vetter I."/>
            <person name="Vlcek C."/>
            <person name="Voet M."/>
            <person name="Volckaert G."/>
            <person name="Voss H."/>
            <person name="Wambutt R."/>
            <person name="Wedler H."/>
            <person name="Wiemann S."/>
            <person name="Winsor B."/>
            <person name="Wolfe K.H."/>
            <person name="Zollner A."/>
            <person name="Zumstein E."/>
            <person name="Kleine K."/>
        </authorList>
    </citation>
    <scope>NUCLEOTIDE SEQUENCE [LARGE SCALE GENOMIC DNA]</scope>
    <source>
        <strain>ATCC 204508 / S288c</strain>
    </source>
</reference>
<reference key="2">
    <citation type="journal article" date="2014" name="G3 (Bethesda)">
        <title>The reference genome sequence of Saccharomyces cerevisiae: Then and now.</title>
        <authorList>
            <person name="Engel S.R."/>
            <person name="Dietrich F.S."/>
            <person name="Fisk D.G."/>
            <person name="Binkley G."/>
            <person name="Balakrishnan R."/>
            <person name="Costanzo M.C."/>
            <person name="Dwight S.S."/>
            <person name="Hitz B.C."/>
            <person name="Karra K."/>
            <person name="Nash R.S."/>
            <person name="Weng S."/>
            <person name="Wong E.D."/>
            <person name="Lloyd P."/>
            <person name="Skrzypek M.S."/>
            <person name="Miyasato S.R."/>
            <person name="Simison M."/>
            <person name="Cherry J.M."/>
        </authorList>
    </citation>
    <scope>GENOME REANNOTATION</scope>
    <source>
        <strain>ATCC 204508 / S288c</strain>
    </source>
</reference>
<reference key="3">
    <citation type="journal article" date="2007" name="PLoS Genet.">
        <title>Genome-wide analysis of Rad52 foci reveals diverse mechanisms impacting recombination.</title>
        <authorList>
            <person name="Alvaro D."/>
            <person name="Lisby M."/>
            <person name="Rothstein R."/>
        </authorList>
    </citation>
    <scope>DISRUPTION PHENOTYPE</scope>
</reference>
<keyword id="KW-0472">Membrane</keyword>
<keyword id="KW-1185">Reference proteome</keyword>
<keyword id="KW-0812">Transmembrane</keyword>
<keyword id="KW-1133">Transmembrane helix</keyword>
<evidence type="ECO:0000255" key="1"/>
<evidence type="ECO:0000269" key="2">
    <source>
    </source>
</evidence>
<evidence type="ECO:0000305" key="3"/>
<evidence type="ECO:0000305" key="4">
    <source>
    </source>
</evidence>
<organism>
    <name type="scientific">Saccharomyces cerevisiae (strain ATCC 204508 / S288c)</name>
    <name type="common">Baker's yeast</name>
    <dbReference type="NCBI Taxonomy" id="559292"/>
    <lineage>
        <taxon>Eukaryota</taxon>
        <taxon>Fungi</taxon>
        <taxon>Dikarya</taxon>
        <taxon>Ascomycota</taxon>
        <taxon>Saccharomycotina</taxon>
        <taxon>Saccharomycetes</taxon>
        <taxon>Saccharomycetales</taxon>
        <taxon>Saccharomycetaceae</taxon>
        <taxon>Saccharomyces</taxon>
    </lineage>
</organism>
<dbReference type="EMBL" id="Z75143">
    <property type="protein sequence ID" value="CAA99455.1"/>
    <property type="molecule type" value="Genomic_DNA"/>
</dbReference>
<dbReference type="EMBL" id="Z75144">
    <property type="protein sequence ID" value="CAA99457.1"/>
    <property type="molecule type" value="Genomic_DNA"/>
</dbReference>
<dbReference type="EMBL" id="BK006948">
    <property type="protein sequence ID" value="DAA80337.1"/>
    <property type="molecule type" value="Genomic_DNA"/>
</dbReference>
<dbReference type="PIR" id="S67128">
    <property type="entry name" value="S67128"/>
</dbReference>
<dbReference type="RefSeq" id="NP_001335817.1">
    <property type="nucleotide sequence ID" value="NM_001348879.1"/>
</dbReference>
<dbReference type="SMR" id="Q08630"/>
<dbReference type="FunCoup" id="Q08630">
    <property type="interactions" value="34"/>
</dbReference>
<dbReference type="IntAct" id="Q08630">
    <property type="interactions" value="1"/>
</dbReference>
<dbReference type="STRING" id="4932.YOR235W"/>
<dbReference type="PaxDb" id="4932-YOR235W"/>
<dbReference type="EnsemblFungi" id="YOR235W_mRNA">
    <property type="protein sequence ID" value="YOR235W"/>
    <property type="gene ID" value="YOR235W"/>
</dbReference>
<dbReference type="GeneID" id="854410"/>
<dbReference type="AGR" id="SGD:S000005761"/>
<dbReference type="SGD" id="S000005761">
    <property type="gene designation" value="IRC13"/>
</dbReference>
<dbReference type="HOGENOM" id="CLU_2252174_0_0_1"/>
<dbReference type="InParanoid" id="Q08630"/>
<dbReference type="PRO" id="PR:Q08630"/>
<dbReference type="Proteomes" id="UP000002311">
    <property type="component" value="Chromosome XV"/>
</dbReference>
<dbReference type="RNAct" id="Q08630">
    <property type="molecule type" value="protein"/>
</dbReference>
<dbReference type="GO" id="GO:0016020">
    <property type="term" value="C:membrane"/>
    <property type="evidence" value="ECO:0007669"/>
    <property type="project" value="UniProtKB-SubCell"/>
</dbReference>
<comment type="function">
    <text evidence="4">May be involved in a pathway contributing to genomic integrity.</text>
</comment>
<comment type="subcellular location">
    <subcellularLocation>
        <location evidence="3">Membrane</location>
        <topology evidence="3">Single-pass membrane protein</topology>
    </subcellularLocation>
</comment>
<comment type="disruption phenotype">
    <text evidence="2">Displays increased levels of spontaneous RAD52 foci in proliferating diploid cells.</text>
</comment>
<sequence>MGLYRPSKFFHPPIPHIPFTINPDFFSFHIQRLKAKANPENFLICFPPPDIYKGFVFCCQLDLVHLFSYVFFLFLLKICVDVLQYVIYPKHFTHKKPGFENYSI</sequence>
<proteinExistence type="predicted"/>
<accession>Q08630</accession>
<accession>A0A1S0T0B8</accession>
<accession>O94149</accession>
<gene>
    <name type="primary">IRC13</name>
    <name type="ordered locus">YOR235W</name>
</gene>
<feature type="chain" id="PRO_0000299728" description="Increased recombination centers protein 13">
    <location>
        <begin position="1"/>
        <end position="104"/>
    </location>
</feature>
<feature type="transmembrane region" description="Helical" evidence="1">
    <location>
        <begin position="63"/>
        <end position="83"/>
    </location>
</feature>
<name>IRC13_YEAST</name>